<name>FMT_BRUAB</name>
<comment type="function">
    <text evidence="1">Attaches a formyl group to the free amino group of methionyl-tRNA(fMet). The formyl group appears to play a dual role in the initiator identity of N-formylmethionyl-tRNA by promoting its recognition by IF2 and preventing the misappropriation of this tRNA by the elongation apparatus.</text>
</comment>
<comment type="catalytic activity">
    <reaction evidence="1">
        <text>L-methionyl-tRNA(fMet) + (6R)-10-formyltetrahydrofolate = N-formyl-L-methionyl-tRNA(fMet) + (6S)-5,6,7,8-tetrahydrofolate + H(+)</text>
        <dbReference type="Rhea" id="RHEA:24380"/>
        <dbReference type="Rhea" id="RHEA-COMP:9952"/>
        <dbReference type="Rhea" id="RHEA-COMP:9953"/>
        <dbReference type="ChEBI" id="CHEBI:15378"/>
        <dbReference type="ChEBI" id="CHEBI:57453"/>
        <dbReference type="ChEBI" id="CHEBI:78530"/>
        <dbReference type="ChEBI" id="CHEBI:78844"/>
        <dbReference type="ChEBI" id="CHEBI:195366"/>
        <dbReference type="EC" id="2.1.2.9"/>
    </reaction>
</comment>
<comment type="similarity">
    <text evidence="1">Belongs to the Fmt family.</text>
</comment>
<reference key="1">
    <citation type="journal article" date="2005" name="J. Bacteriol.">
        <title>Completion of the genome sequence of Brucella abortus and comparison to the highly similar genomes of Brucella melitensis and Brucella suis.</title>
        <authorList>
            <person name="Halling S.M."/>
            <person name="Peterson-Burch B.D."/>
            <person name="Bricker B.J."/>
            <person name="Zuerner R.L."/>
            <person name="Qing Z."/>
            <person name="Li L.-L."/>
            <person name="Kapur V."/>
            <person name="Alt D.P."/>
            <person name="Olsen S.C."/>
        </authorList>
    </citation>
    <scope>NUCLEOTIDE SEQUENCE [LARGE SCALE GENOMIC DNA]</scope>
    <source>
        <strain>9-941</strain>
    </source>
</reference>
<gene>
    <name evidence="1" type="primary">fmt</name>
    <name type="ordered locus">BruAb2_0974</name>
</gene>
<evidence type="ECO:0000255" key="1">
    <source>
        <dbReference type="HAMAP-Rule" id="MF_00182"/>
    </source>
</evidence>
<sequence length="306" mass="32745">MRVVFMGTPEFSVPILTAIIGHGYEVVAAYTQPPRPAGRRGLELTRSPVHEKAEQFGIPVFTPTSLKGAEEQDVFASLEADVAIVVAYGLLLPKAILDAPRLGCYNGHASLLPRWRGAAPIQRAIMAGDAETGMMIMKMDEGLDTGPVAMAEKVAITPDMTAGELHDRLSMIGADLMIRALGALERESLALQPQAEEGVTYAAKIDKAEARIDWSKPAKDVHNSIRGLSPFPGAWCEMEINGAVERVKLQRSTLGEGSGAPGTVLDDRLTIACGEGAVRLATLQRSGGKPLPAQEFLRGQRVTKVL</sequence>
<organism>
    <name type="scientific">Brucella abortus biovar 1 (strain 9-941)</name>
    <dbReference type="NCBI Taxonomy" id="262698"/>
    <lineage>
        <taxon>Bacteria</taxon>
        <taxon>Pseudomonadati</taxon>
        <taxon>Pseudomonadota</taxon>
        <taxon>Alphaproteobacteria</taxon>
        <taxon>Hyphomicrobiales</taxon>
        <taxon>Brucellaceae</taxon>
        <taxon>Brucella/Ochrobactrum group</taxon>
        <taxon>Brucella</taxon>
    </lineage>
</organism>
<accession>Q576T0</accession>
<feature type="chain" id="PRO_0000082930" description="Methionyl-tRNA formyltransferase">
    <location>
        <begin position="1"/>
        <end position="306"/>
    </location>
</feature>
<feature type="binding site" evidence="1">
    <location>
        <begin position="110"/>
        <end position="113"/>
    </location>
    <ligand>
        <name>(6S)-5,6,7,8-tetrahydrofolate</name>
        <dbReference type="ChEBI" id="CHEBI:57453"/>
    </ligand>
</feature>
<keyword id="KW-0648">Protein biosynthesis</keyword>
<keyword id="KW-0808">Transferase</keyword>
<proteinExistence type="inferred from homology"/>
<dbReference type="EC" id="2.1.2.9" evidence="1"/>
<dbReference type="EMBL" id="AE017224">
    <property type="protein sequence ID" value="AAX76354.1"/>
    <property type="molecule type" value="Genomic_DNA"/>
</dbReference>
<dbReference type="RefSeq" id="WP_002967377.1">
    <property type="nucleotide sequence ID" value="NC_006933.1"/>
</dbReference>
<dbReference type="SMR" id="Q576T0"/>
<dbReference type="EnsemblBacteria" id="AAX76354">
    <property type="protein sequence ID" value="AAX76354"/>
    <property type="gene ID" value="BruAb2_0974"/>
</dbReference>
<dbReference type="GeneID" id="93015183"/>
<dbReference type="KEGG" id="bmb:BruAb2_0974"/>
<dbReference type="HOGENOM" id="CLU_033347_1_2_5"/>
<dbReference type="Proteomes" id="UP000000540">
    <property type="component" value="Chromosome II"/>
</dbReference>
<dbReference type="GO" id="GO:0005829">
    <property type="term" value="C:cytosol"/>
    <property type="evidence" value="ECO:0007669"/>
    <property type="project" value="TreeGrafter"/>
</dbReference>
<dbReference type="GO" id="GO:0004479">
    <property type="term" value="F:methionyl-tRNA formyltransferase activity"/>
    <property type="evidence" value="ECO:0007669"/>
    <property type="project" value="UniProtKB-UniRule"/>
</dbReference>
<dbReference type="CDD" id="cd08646">
    <property type="entry name" value="FMT_core_Met-tRNA-FMT_N"/>
    <property type="match status" value="1"/>
</dbReference>
<dbReference type="CDD" id="cd08704">
    <property type="entry name" value="Met_tRNA_FMT_C"/>
    <property type="match status" value="1"/>
</dbReference>
<dbReference type="Gene3D" id="3.10.25.10">
    <property type="entry name" value="Formyl transferase, C-terminal domain"/>
    <property type="match status" value="1"/>
</dbReference>
<dbReference type="Gene3D" id="3.40.50.170">
    <property type="entry name" value="Formyl transferase, N-terminal domain"/>
    <property type="match status" value="1"/>
</dbReference>
<dbReference type="HAMAP" id="MF_00182">
    <property type="entry name" value="Formyl_trans"/>
    <property type="match status" value="1"/>
</dbReference>
<dbReference type="InterPro" id="IPR005794">
    <property type="entry name" value="Fmt"/>
</dbReference>
<dbReference type="InterPro" id="IPR005793">
    <property type="entry name" value="Formyl_trans_C"/>
</dbReference>
<dbReference type="InterPro" id="IPR037022">
    <property type="entry name" value="Formyl_trans_C_sf"/>
</dbReference>
<dbReference type="InterPro" id="IPR002376">
    <property type="entry name" value="Formyl_transf_N"/>
</dbReference>
<dbReference type="InterPro" id="IPR036477">
    <property type="entry name" value="Formyl_transf_N_sf"/>
</dbReference>
<dbReference type="InterPro" id="IPR011034">
    <property type="entry name" value="Formyl_transferase-like_C_sf"/>
</dbReference>
<dbReference type="InterPro" id="IPR001555">
    <property type="entry name" value="GART_AS"/>
</dbReference>
<dbReference type="InterPro" id="IPR044135">
    <property type="entry name" value="Met-tRNA-FMT_C"/>
</dbReference>
<dbReference type="InterPro" id="IPR041711">
    <property type="entry name" value="Met-tRNA-FMT_N"/>
</dbReference>
<dbReference type="NCBIfam" id="TIGR00460">
    <property type="entry name" value="fmt"/>
    <property type="match status" value="1"/>
</dbReference>
<dbReference type="PANTHER" id="PTHR11138">
    <property type="entry name" value="METHIONYL-TRNA FORMYLTRANSFERASE"/>
    <property type="match status" value="1"/>
</dbReference>
<dbReference type="PANTHER" id="PTHR11138:SF5">
    <property type="entry name" value="METHIONYL-TRNA FORMYLTRANSFERASE, MITOCHONDRIAL"/>
    <property type="match status" value="1"/>
</dbReference>
<dbReference type="Pfam" id="PF02911">
    <property type="entry name" value="Formyl_trans_C"/>
    <property type="match status" value="1"/>
</dbReference>
<dbReference type="Pfam" id="PF00551">
    <property type="entry name" value="Formyl_trans_N"/>
    <property type="match status" value="1"/>
</dbReference>
<dbReference type="SUPFAM" id="SSF50486">
    <property type="entry name" value="FMT C-terminal domain-like"/>
    <property type="match status" value="1"/>
</dbReference>
<dbReference type="SUPFAM" id="SSF53328">
    <property type="entry name" value="Formyltransferase"/>
    <property type="match status" value="1"/>
</dbReference>
<dbReference type="PROSITE" id="PS00373">
    <property type="entry name" value="GART"/>
    <property type="match status" value="1"/>
</dbReference>
<protein>
    <recommendedName>
        <fullName evidence="1">Methionyl-tRNA formyltransferase</fullName>
        <ecNumber evidence="1">2.1.2.9</ecNumber>
    </recommendedName>
</protein>